<protein>
    <recommendedName>
        <fullName evidence="1">Acetate kinase</fullName>
        <ecNumber evidence="1">2.7.2.1</ecNumber>
    </recommendedName>
    <alternativeName>
        <fullName evidence="1">Acetokinase</fullName>
    </alternativeName>
</protein>
<name>ACKA_MANSM</name>
<gene>
    <name evidence="1" type="primary">ackA</name>
    <name type="ordered locus">MS0999</name>
</gene>
<accession>Q65TV4</accession>
<evidence type="ECO:0000255" key="1">
    <source>
        <dbReference type="HAMAP-Rule" id="MF_00020"/>
    </source>
</evidence>
<evidence type="ECO:0000305" key="2"/>
<comment type="function">
    <text evidence="1">Catalyzes the formation of acetyl phosphate from acetate and ATP. Can also catalyze the reverse reaction.</text>
</comment>
<comment type="catalytic activity">
    <reaction evidence="1">
        <text>acetate + ATP = acetyl phosphate + ADP</text>
        <dbReference type="Rhea" id="RHEA:11352"/>
        <dbReference type="ChEBI" id="CHEBI:22191"/>
        <dbReference type="ChEBI" id="CHEBI:30089"/>
        <dbReference type="ChEBI" id="CHEBI:30616"/>
        <dbReference type="ChEBI" id="CHEBI:456216"/>
        <dbReference type="EC" id="2.7.2.1"/>
    </reaction>
</comment>
<comment type="cofactor">
    <cofactor evidence="1">
        <name>Mg(2+)</name>
        <dbReference type="ChEBI" id="CHEBI:18420"/>
    </cofactor>
    <cofactor evidence="1">
        <name>Mn(2+)</name>
        <dbReference type="ChEBI" id="CHEBI:29035"/>
    </cofactor>
    <text evidence="1">Mg(2+). Can also accept Mn(2+).</text>
</comment>
<comment type="pathway">
    <text evidence="1">Metabolic intermediate biosynthesis; acetyl-CoA biosynthesis; acetyl-CoA from acetate: step 1/2.</text>
</comment>
<comment type="subunit">
    <text evidence="1">Homodimer.</text>
</comment>
<comment type="subcellular location">
    <subcellularLocation>
        <location evidence="1">Cytoplasm</location>
    </subcellularLocation>
</comment>
<comment type="similarity">
    <text evidence="1">Belongs to the acetokinase family.</text>
</comment>
<comment type="sequence caution" evidence="2">
    <conflict type="erroneous initiation">
        <sequence resource="EMBL-CDS" id="AAU37606"/>
    </conflict>
</comment>
<feature type="chain" id="PRO_0000107581" description="Acetate kinase">
    <location>
        <begin position="1"/>
        <end position="407"/>
    </location>
</feature>
<feature type="active site" description="Proton donor/acceptor" evidence="1">
    <location>
        <position position="150"/>
    </location>
</feature>
<feature type="binding site" evidence="1">
    <location>
        <position position="10"/>
    </location>
    <ligand>
        <name>Mg(2+)</name>
        <dbReference type="ChEBI" id="CHEBI:18420"/>
    </ligand>
</feature>
<feature type="binding site" evidence="1">
    <location>
        <position position="17"/>
    </location>
    <ligand>
        <name>ATP</name>
        <dbReference type="ChEBI" id="CHEBI:30616"/>
    </ligand>
</feature>
<feature type="binding site" evidence="1">
    <location>
        <position position="91"/>
    </location>
    <ligand>
        <name>substrate</name>
    </ligand>
</feature>
<feature type="binding site" evidence="1">
    <location>
        <begin position="210"/>
        <end position="214"/>
    </location>
    <ligand>
        <name>ATP</name>
        <dbReference type="ChEBI" id="CHEBI:30616"/>
    </ligand>
</feature>
<feature type="binding site" evidence="1">
    <location>
        <begin position="285"/>
        <end position="287"/>
    </location>
    <ligand>
        <name>ATP</name>
        <dbReference type="ChEBI" id="CHEBI:30616"/>
    </ligand>
</feature>
<feature type="binding site" evidence="1">
    <location>
        <begin position="338"/>
        <end position="342"/>
    </location>
    <ligand>
        <name>ATP</name>
        <dbReference type="ChEBI" id="CHEBI:30616"/>
    </ligand>
</feature>
<feature type="binding site" evidence="1">
    <location>
        <position position="392"/>
    </location>
    <ligand>
        <name>Mg(2+)</name>
        <dbReference type="ChEBI" id="CHEBI:18420"/>
    </ligand>
</feature>
<feature type="site" description="Transition state stabilizer" evidence="1">
    <location>
        <position position="182"/>
    </location>
</feature>
<feature type="site" description="Transition state stabilizer" evidence="1">
    <location>
        <position position="243"/>
    </location>
</feature>
<sequence>MSQKLVLILNCGSSSLKFSILDPKTGEEKLSGLAEAFYLDDARIKWKLHGEKGNAELGKGAAHSEALNFIVNNIFPLDPTLKDGIVAIGHRIVHGGEKFTSSVIVTDEVVKGIEDAIQFAPLHNPAHLIGIKEAFKIFPHLKDKNVVVFDTAFHQTMPEEAYLYALPYSLYKEHGVRRYGAHGTSHYFVSREAAKRLGVAEDKVNVITCHLGNGGSVSAVRHGQCIDTSMGLTPLEGLVMGTRCGDIDPAIMFYMHDTLGMSVEEINTTLTKKSGLLGLTEVTSDCRFAEDNYDNEDESLRVPAKRAMDVYCYRLAKYIGSYMAVIGERLDAIVFTGGIGENSAHVREITLNHLKLFGYQLDQEKNLAARFGNEGIITADNTPIAMVIPTNEELVIAQDTARLCIKD</sequence>
<organism>
    <name type="scientific">Mannheimia succiniciproducens (strain KCTC 0769BP / MBEL55E)</name>
    <dbReference type="NCBI Taxonomy" id="221988"/>
    <lineage>
        <taxon>Bacteria</taxon>
        <taxon>Pseudomonadati</taxon>
        <taxon>Pseudomonadota</taxon>
        <taxon>Gammaproteobacteria</taxon>
        <taxon>Pasteurellales</taxon>
        <taxon>Pasteurellaceae</taxon>
        <taxon>Basfia</taxon>
    </lineage>
</organism>
<keyword id="KW-0067">ATP-binding</keyword>
<keyword id="KW-0963">Cytoplasm</keyword>
<keyword id="KW-0418">Kinase</keyword>
<keyword id="KW-0460">Magnesium</keyword>
<keyword id="KW-0479">Metal-binding</keyword>
<keyword id="KW-0547">Nucleotide-binding</keyword>
<keyword id="KW-0808">Transferase</keyword>
<proteinExistence type="inferred from homology"/>
<reference key="1">
    <citation type="journal article" date="2004" name="Nat. Biotechnol.">
        <title>The genome sequence of the capnophilic rumen bacterium Mannheimia succiniciproducens.</title>
        <authorList>
            <person name="Hong S.H."/>
            <person name="Kim J.S."/>
            <person name="Lee S.Y."/>
            <person name="In Y.H."/>
            <person name="Choi S.S."/>
            <person name="Rih J.-K."/>
            <person name="Kim C.H."/>
            <person name="Jeong H."/>
            <person name="Hur C.G."/>
            <person name="Kim J.J."/>
        </authorList>
    </citation>
    <scope>NUCLEOTIDE SEQUENCE [LARGE SCALE GENOMIC DNA]</scope>
    <source>
        <strain>KCTC 0769BP / MBEL55E</strain>
    </source>
</reference>
<dbReference type="EC" id="2.7.2.1" evidence="1"/>
<dbReference type="EMBL" id="AE016827">
    <property type="protein sequence ID" value="AAU37606.1"/>
    <property type="status" value="ALT_INIT"/>
    <property type="molecule type" value="Genomic_DNA"/>
</dbReference>
<dbReference type="RefSeq" id="WP_041639691.1">
    <property type="nucleotide sequence ID" value="NC_006300.1"/>
</dbReference>
<dbReference type="SMR" id="Q65TV4"/>
<dbReference type="STRING" id="221988.MS0999"/>
<dbReference type="KEGG" id="msu:MS0999"/>
<dbReference type="eggNOG" id="COG0282">
    <property type="taxonomic scope" value="Bacteria"/>
</dbReference>
<dbReference type="HOGENOM" id="CLU_020352_0_1_6"/>
<dbReference type="OrthoDB" id="9802453at2"/>
<dbReference type="UniPathway" id="UPA00340">
    <property type="reaction ID" value="UER00458"/>
</dbReference>
<dbReference type="Proteomes" id="UP000000607">
    <property type="component" value="Chromosome"/>
</dbReference>
<dbReference type="GO" id="GO:0005829">
    <property type="term" value="C:cytosol"/>
    <property type="evidence" value="ECO:0007669"/>
    <property type="project" value="TreeGrafter"/>
</dbReference>
<dbReference type="GO" id="GO:0008776">
    <property type="term" value="F:acetate kinase activity"/>
    <property type="evidence" value="ECO:0007669"/>
    <property type="project" value="UniProtKB-UniRule"/>
</dbReference>
<dbReference type="GO" id="GO:0005524">
    <property type="term" value="F:ATP binding"/>
    <property type="evidence" value="ECO:0007669"/>
    <property type="project" value="UniProtKB-KW"/>
</dbReference>
<dbReference type="GO" id="GO:0000287">
    <property type="term" value="F:magnesium ion binding"/>
    <property type="evidence" value="ECO:0007669"/>
    <property type="project" value="UniProtKB-UniRule"/>
</dbReference>
<dbReference type="GO" id="GO:0006083">
    <property type="term" value="P:acetate metabolic process"/>
    <property type="evidence" value="ECO:0007669"/>
    <property type="project" value="TreeGrafter"/>
</dbReference>
<dbReference type="GO" id="GO:0006085">
    <property type="term" value="P:acetyl-CoA biosynthetic process"/>
    <property type="evidence" value="ECO:0007669"/>
    <property type="project" value="UniProtKB-UniRule"/>
</dbReference>
<dbReference type="CDD" id="cd24010">
    <property type="entry name" value="ASKHA_NBD_AcK_PK"/>
    <property type="match status" value="1"/>
</dbReference>
<dbReference type="FunFam" id="3.30.420.40:FF:000041">
    <property type="entry name" value="Acetate kinase"/>
    <property type="match status" value="1"/>
</dbReference>
<dbReference type="FunFam" id="3.30.420.40:FF:000042">
    <property type="entry name" value="Acetate kinase"/>
    <property type="match status" value="1"/>
</dbReference>
<dbReference type="Gene3D" id="3.30.420.40">
    <property type="match status" value="2"/>
</dbReference>
<dbReference type="HAMAP" id="MF_00020">
    <property type="entry name" value="Acetate_kinase"/>
    <property type="match status" value="1"/>
</dbReference>
<dbReference type="InterPro" id="IPR004372">
    <property type="entry name" value="Ac/propionate_kinase"/>
</dbReference>
<dbReference type="InterPro" id="IPR000890">
    <property type="entry name" value="Aliphatic_acid_kin_short-chain"/>
</dbReference>
<dbReference type="InterPro" id="IPR023865">
    <property type="entry name" value="Aliphatic_acid_kinase_CS"/>
</dbReference>
<dbReference type="InterPro" id="IPR043129">
    <property type="entry name" value="ATPase_NBD"/>
</dbReference>
<dbReference type="NCBIfam" id="TIGR00016">
    <property type="entry name" value="ackA"/>
    <property type="match status" value="1"/>
</dbReference>
<dbReference type="PANTHER" id="PTHR21060">
    <property type="entry name" value="ACETATE KINASE"/>
    <property type="match status" value="1"/>
</dbReference>
<dbReference type="PANTHER" id="PTHR21060:SF21">
    <property type="entry name" value="ACETATE KINASE"/>
    <property type="match status" value="1"/>
</dbReference>
<dbReference type="Pfam" id="PF00871">
    <property type="entry name" value="Acetate_kinase"/>
    <property type="match status" value="1"/>
</dbReference>
<dbReference type="PIRSF" id="PIRSF000722">
    <property type="entry name" value="Acetate_prop_kin"/>
    <property type="match status" value="1"/>
</dbReference>
<dbReference type="PRINTS" id="PR00471">
    <property type="entry name" value="ACETATEKNASE"/>
</dbReference>
<dbReference type="SUPFAM" id="SSF53067">
    <property type="entry name" value="Actin-like ATPase domain"/>
    <property type="match status" value="2"/>
</dbReference>
<dbReference type="PROSITE" id="PS01075">
    <property type="entry name" value="ACETATE_KINASE_1"/>
    <property type="match status" value="1"/>
</dbReference>
<dbReference type="PROSITE" id="PS01076">
    <property type="entry name" value="ACETATE_KINASE_2"/>
    <property type="match status" value="1"/>
</dbReference>